<reference key="1">
    <citation type="journal article" date="2002" name="DNA Res.">
        <title>Complete genomic sequence of nitrogen-fixing symbiotic bacterium Bradyrhizobium japonicum USDA110.</title>
        <authorList>
            <person name="Kaneko T."/>
            <person name="Nakamura Y."/>
            <person name="Sato S."/>
            <person name="Minamisawa K."/>
            <person name="Uchiumi T."/>
            <person name="Sasamoto S."/>
            <person name="Watanabe A."/>
            <person name="Idesawa K."/>
            <person name="Iriguchi M."/>
            <person name="Kawashima K."/>
            <person name="Kohara M."/>
            <person name="Matsumoto M."/>
            <person name="Shimpo S."/>
            <person name="Tsuruoka H."/>
            <person name="Wada T."/>
            <person name="Yamada M."/>
            <person name="Tabata S."/>
        </authorList>
    </citation>
    <scope>NUCLEOTIDE SEQUENCE [LARGE SCALE GENOMIC DNA]</scope>
    <source>
        <strain>JCM 10833 / BCRC 13528 / IAM 13628 / NBRC 14792 / USDA 110</strain>
    </source>
</reference>
<sequence>MEAVILFPAIDLKNGQCVRLEQGDMARATVFNLNPAAQAQSFAEQGFEYLHVVDLDGAFAGKPVNAQAVEAMLKTIKIPVQLGGGIRDLATVEAWLEKGITRVIIGTAAVRDPDLVKAAAKKFPGRVAVGLDARDGKVAVEGWAETSQVTALEIAQRFEDAGVAAIIFTDIARDGLLKGLNLDATIALADSISIPVIASGGLASIDDVKAMLTPRAKKLAGAIAGRALYDGRLDPAAALTLIRNARAA</sequence>
<comment type="catalytic activity">
    <reaction evidence="1">
        <text>1-(5-phospho-beta-D-ribosyl)-5-[(5-phospho-beta-D-ribosylamino)methylideneamino]imidazole-4-carboxamide = 5-[(5-phospho-1-deoxy-D-ribulos-1-ylimino)methylamino]-1-(5-phospho-beta-D-ribosyl)imidazole-4-carboxamide</text>
        <dbReference type="Rhea" id="RHEA:15469"/>
        <dbReference type="ChEBI" id="CHEBI:58435"/>
        <dbReference type="ChEBI" id="CHEBI:58525"/>
        <dbReference type="EC" id="5.3.1.16"/>
    </reaction>
</comment>
<comment type="pathway">
    <text evidence="1">Amino-acid biosynthesis; L-histidine biosynthesis; L-histidine from 5-phospho-alpha-D-ribose 1-diphosphate: step 4/9.</text>
</comment>
<comment type="subcellular location">
    <subcellularLocation>
        <location evidence="1">Cytoplasm</location>
    </subcellularLocation>
</comment>
<comment type="similarity">
    <text evidence="1">Belongs to the HisA/HisF family.</text>
</comment>
<dbReference type="EC" id="5.3.1.16" evidence="1"/>
<dbReference type="EMBL" id="BA000040">
    <property type="protein sequence ID" value="BAC45918.1"/>
    <property type="molecule type" value="Genomic_DNA"/>
</dbReference>
<dbReference type="RefSeq" id="NP_767293.2">
    <property type="nucleotide sequence ID" value="NC_004463.1"/>
</dbReference>
<dbReference type="RefSeq" id="WP_038965127.1">
    <property type="nucleotide sequence ID" value="NC_004463.1"/>
</dbReference>
<dbReference type="SMR" id="Q89WM5"/>
<dbReference type="FunCoup" id="Q89WM5">
    <property type="interactions" value="575"/>
</dbReference>
<dbReference type="STRING" id="224911.AAV28_00100"/>
<dbReference type="EnsemblBacteria" id="BAC45918">
    <property type="protein sequence ID" value="BAC45918"/>
    <property type="gene ID" value="BAC45918"/>
</dbReference>
<dbReference type="GeneID" id="46487926"/>
<dbReference type="KEGG" id="bja:blr0653"/>
<dbReference type="PATRIC" id="fig|224911.44.peg.22"/>
<dbReference type="eggNOG" id="COG0106">
    <property type="taxonomic scope" value="Bacteria"/>
</dbReference>
<dbReference type="HOGENOM" id="CLU_048577_1_1_5"/>
<dbReference type="InParanoid" id="Q89WM5"/>
<dbReference type="OrthoDB" id="9807749at2"/>
<dbReference type="UniPathway" id="UPA00031">
    <property type="reaction ID" value="UER00009"/>
</dbReference>
<dbReference type="Proteomes" id="UP000002526">
    <property type="component" value="Chromosome"/>
</dbReference>
<dbReference type="GO" id="GO:0005737">
    <property type="term" value="C:cytoplasm"/>
    <property type="evidence" value="ECO:0000318"/>
    <property type="project" value="GO_Central"/>
</dbReference>
<dbReference type="GO" id="GO:0003949">
    <property type="term" value="F:1-(5-phosphoribosyl)-5-[(5-phosphoribosylamino)methylideneamino]imidazole-4-carboxamide isomerase activity"/>
    <property type="evidence" value="ECO:0000318"/>
    <property type="project" value="GO_Central"/>
</dbReference>
<dbReference type="GO" id="GO:0000105">
    <property type="term" value="P:L-histidine biosynthetic process"/>
    <property type="evidence" value="ECO:0000318"/>
    <property type="project" value="GO_Central"/>
</dbReference>
<dbReference type="CDD" id="cd04732">
    <property type="entry name" value="HisA"/>
    <property type="match status" value="1"/>
</dbReference>
<dbReference type="FunFam" id="3.20.20.70:FF:000009">
    <property type="entry name" value="1-(5-phosphoribosyl)-5-[(5-phosphoribosylamino)methylideneamino] imidazole-4-carboxamide isomerase"/>
    <property type="match status" value="1"/>
</dbReference>
<dbReference type="Gene3D" id="3.20.20.70">
    <property type="entry name" value="Aldolase class I"/>
    <property type="match status" value="1"/>
</dbReference>
<dbReference type="HAMAP" id="MF_01014">
    <property type="entry name" value="HisA"/>
    <property type="match status" value="1"/>
</dbReference>
<dbReference type="InterPro" id="IPR013785">
    <property type="entry name" value="Aldolase_TIM"/>
</dbReference>
<dbReference type="InterPro" id="IPR006062">
    <property type="entry name" value="His_biosynth"/>
</dbReference>
<dbReference type="InterPro" id="IPR006063">
    <property type="entry name" value="HisA_bact_arch"/>
</dbReference>
<dbReference type="InterPro" id="IPR044524">
    <property type="entry name" value="Isoase_HisA-like"/>
</dbReference>
<dbReference type="InterPro" id="IPR023016">
    <property type="entry name" value="Isoase_HisA-like_bact"/>
</dbReference>
<dbReference type="InterPro" id="IPR011060">
    <property type="entry name" value="RibuloseP-bd_barrel"/>
</dbReference>
<dbReference type="NCBIfam" id="TIGR00007">
    <property type="entry name" value="1-(5-phosphoribosyl)-5-[(5-phosphoribosylamino)methylideneamino]imidazole-4-carboxamide isomerase"/>
    <property type="match status" value="1"/>
</dbReference>
<dbReference type="NCBIfam" id="NF010112">
    <property type="entry name" value="PRK13585.1"/>
    <property type="match status" value="1"/>
</dbReference>
<dbReference type="PANTHER" id="PTHR43090">
    <property type="entry name" value="1-(5-PHOSPHORIBOSYL)-5-[(5-PHOSPHORIBOSYLAMINO)METHYLIDENEAMINO] IMIDAZOLE-4-CARBOXAMIDE ISOMERASE"/>
    <property type="match status" value="1"/>
</dbReference>
<dbReference type="PANTHER" id="PTHR43090:SF2">
    <property type="entry name" value="1-(5-PHOSPHORIBOSYL)-5-[(5-PHOSPHORIBOSYLAMINO)METHYLIDENEAMINO] IMIDAZOLE-4-CARBOXAMIDE ISOMERASE"/>
    <property type="match status" value="1"/>
</dbReference>
<dbReference type="Pfam" id="PF00977">
    <property type="entry name" value="His_biosynth"/>
    <property type="match status" value="1"/>
</dbReference>
<dbReference type="SUPFAM" id="SSF51366">
    <property type="entry name" value="Ribulose-phoshate binding barrel"/>
    <property type="match status" value="1"/>
</dbReference>
<evidence type="ECO:0000255" key="1">
    <source>
        <dbReference type="HAMAP-Rule" id="MF_01014"/>
    </source>
</evidence>
<proteinExistence type="inferred from homology"/>
<protein>
    <recommendedName>
        <fullName evidence="1">1-(5-phosphoribosyl)-5-[(5-phosphoribosylamino)methylideneamino] imidazole-4-carboxamide isomerase</fullName>
        <ecNumber evidence="1">5.3.1.16</ecNumber>
    </recommendedName>
    <alternativeName>
        <fullName evidence="1">Phosphoribosylformimino-5-aminoimidazole carboxamide ribotide isomerase</fullName>
    </alternativeName>
</protein>
<keyword id="KW-0028">Amino-acid biosynthesis</keyword>
<keyword id="KW-0963">Cytoplasm</keyword>
<keyword id="KW-0368">Histidine biosynthesis</keyword>
<keyword id="KW-0413">Isomerase</keyword>
<keyword id="KW-1185">Reference proteome</keyword>
<gene>
    <name evidence="1" type="primary">hisA</name>
    <name type="ordered locus">blr0653</name>
</gene>
<accession>Q89WM5</accession>
<name>HIS4_BRADU</name>
<feature type="chain" id="PRO_0000141984" description="1-(5-phosphoribosyl)-5-[(5-phosphoribosylamino)methylideneamino] imidazole-4-carboxamide isomerase">
    <location>
        <begin position="1"/>
        <end position="248"/>
    </location>
</feature>
<feature type="active site" description="Proton acceptor" evidence="1">
    <location>
        <position position="11"/>
    </location>
</feature>
<feature type="active site" description="Proton donor" evidence="1">
    <location>
        <position position="132"/>
    </location>
</feature>
<organism>
    <name type="scientific">Bradyrhizobium diazoefficiens (strain JCM 10833 / BCRC 13528 / IAM 13628 / NBRC 14792 / USDA 110)</name>
    <dbReference type="NCBI Taxonomy" id="224911"/>
    <lineage>
        <taxon>Bacteria</taxon>
        <taxon>Pseudomonadati</taxon>
        <taxon>Pseudomonadota</taxon>
        <taxon>Alphaproteobacteria</taxon>
        <taxon>Hyphomicrobiales</taxon>
        <taxon>Nitrobacteraceae</taxon>
        <taxon>Bradyrhizobium</taxon>
    </lineage>
</organism>